<comment type="function">
    <text evidence="3 4 6">Catalyzes the radical-mediated insertion of two sulfur atoms into the C-6 and C-8 positions of the octanoyl moiety bound to the lipoyl domains of lipoate-dependent enzymes, thereby converting the octanoylated domains into lipoylated derivatives. Free octanoate is not a substrate for LipA.</text>
</comment>
<comment type="catalytic activity">
    <reaction evidence="1 6">
        <text>[[Fe-S] cluster scaffold protein carrying a second [4Fe-4S](2+) cluster] + N(6)-octanoyl-L-lysyl-[protein] + 2 oxidized [2Fe-2S]-[ferredoxin] + 2 S-adenosyl-L-methionine + 4 H(+) = [[Fe-S] cluster scaffold protein] + N(6)-[(R)-dihydrolipoyl]-L-lysyl-[protein] + 4 Fe(3+) + 2 hydrogen sulfide + 2 5'-deoxyadenosine + 2 L-methionine + 2 reduced [2Fe-2S]-[ferredoxin]</text>
        <dbReference type="Rhea" id="RHEA:16585"/>
        <dbReference type="Rhea" id="RHEA-COMP:9928"/>
        <dbReference type="Rhea" id="RHEA-COMP:10000"/>
        <dbReference type="Rhea" id="RHEA-COMP:10001"/>
        <dbReference type="Rhea" id="RHEA-COMP:10475"/>
        <dbReference type="Rhea" id="RHEA-COMP:14568"/>
        <dbReference type="Rhea" id="RHEA-COMP:14569"/>
        <dbReference type="ChEBI" id="CHEBI:15378"/>
        <dbReference type="ChEBI" id="CHEBI:17319"/>
        <dbReference type="ChEBI" id="CHEBI:29034"/>
        <dbReference type="ChEBI" id="CHEBI:29919"/>
        <dbReference type="ChEBI" id="CHEBI:33722"/>
        <dbReference type="ChEBI" id="CHEBI:33737"/>
        <dbReference type="ChEBI" id="CHEBI:33738"/>
        <dbReference type="ChEBI" id="CHEBI:57844"/>
        <dbReference type="ChEBI" id="CHEBI:59789"/>
        <dbReference type="ChEBI" id="CHEBI:78809"/>
        <dbReference type="ChEBI" id="CHEBI:83100"/>
        <dbReference type="EC" id="2.8.1.8"/>
    </reaction>
</comment>
<comment type="cofactor">
    <cofactor evidence="1 7">
        <name>[4Fe-4S] cluster</name>
        <dbReference type="ChEBI" id="CHEBI:49883"/>
    </cofactor>
    <text evidence="1 7">Binds 2 [4Fe-4S] clusters per subunit. One cluster is coordinated with 3 cysteines and an exchangeable S-adenosyl-L-methionine.</text>
</comment>
<comment type="activity regulation">
    <text evidence="8">Is physiologically inhibited by accumulation of the reaction product 5'-deoxyadenosine (PubMed:15911379). Inhibited by the AdoMet analog S-adenosyl homocysteine.</text>
</comment>
<comment type="pathway">
    <text evidence="1 5">Protein modification; protein lipoylation via endogenous pathway; protein N(6)-(lipoyl)lysine from octanoyl-[acyl-carrier-protein]: step 2/2.</text>
</comment>
<comment type="subunit">
    <text>Monomer or homodimer.</text>
</comment>
<comment type="subcellular location">
    <subcellularLocation>
        <location evidence="1">Cytoplasm</location>
    </subcellularLocation>
</comment>
<comment type="miscellaneous">
    <text>The source of sulfurs is the LipA protein itself, most likely one 4Fe-4S cluster.</text>
</comment>
<comment type="similarity">
    <text evidence="1 9">Belongs to the radical SAM superfamily. Lipoyl synthase family.</text>
</comment>
<comment type="sequence caution" evidence="9">
    <conflict type="erroneous initiation">
        <sequence resource="EMBL-CDS" id="AAA24072"/>
    </conflict>
    <text>Truncated N-terminus.</text>
</comment>
<proteinExistence type="evidence at protein level"/>
<evidence type="ECO:0000255" key="1">
    <source>
        <dbReference type="HAMAP-Rule" id="MF_00206"/>
    </source>
</evidence>
<evidence type="ECO:0000255" key="2">
    <source>
        <dbReference type="PROSITE-ProRule" id="PRU01266"/>
    </source>
</evidence>
<evidence type="ECO:0000269" key="3">
    <source>
    </source>
</evidence>
<evidence type="ECO:0000269" key="4">
    <source>
    </source>
</evidence>
<evidence type="ECO:0000269" key="5">
    <source>
    </source>
</evidence>
<evidence type="ECO:0000269" key="6">
    <source>
    </source>
</evidence>
<evidence type="ECO:0000269" key="7">
    <source>
    </source>
</evidence>
<evidence type="ECO:0000269" key="8">
    <source>
    </source>
</evidence>
<evidence type="ECO:0000305" key="9"/>
<accession>P60716</accession>
<accession>P25845</accession>
<accession>P77595</accession>
<protein>
    <recommendedName>
        <fullName evidence="1">Lipoyl synthase</fullName>
        <ecNumber evidence="1 6">2.8.1.8</ecNumber>
    </recommendedName>
    <alternativeName>
        <fullName evidence="1">Lip-syn</fullName>
        <shortName evidence="1">LS</shortName>
    </alternativeName>
    <alternativeName>
        <fullName evidence="1">Lipoate synthase</fullName>
    </alternativeName>
    <alternativeName>
        <fullName evidence="1">Lipoic acid synthase</fullName>
    </alternativeName>
    <alternativeName>
        <fullName evidence="1">Sulfur insertion protein LipA</fullName>
    </alternativeName>
</protein>
<gene>
    <name evidence="1" type="primary">lipA</name>
    <name type="synonym">lip</name>
    <name type="ordered locus">b0628</name>
    <name type="ordered locus">JW0623</name>
</gene>
<name>LIPA_ECOLI</name>
<feature type="chain" id="PRO_0000102313" description="Lipoyl synthase">
    <location>
        <begin position="1"/>
        <end position="321"/>
    </location>
</feature>
<feature type="domain" description="Radical SAM core" evidence="2">
    <location>
        <begin position="80"/>
        <end position="297"/>
    </location>
</feature>
<feature type="binding site" evidence="1">
    <location>
        <position position="68"/>
    </location>
    <ligand>
        <name>[4Fe-4S] cluster</name>
        <dbReference type="ChEBI" id="CHEBI:49883"/>
        <label>1</label>
    </ligand>
</feature>
<feature type="binding site" evidence="1">
    <location>
        <position position="73"/>
    </location>
    <ligand>
        <name>[4Fe-4S] cluster</name>
        <dbReference type="ChEBI" id="CHEBI:49883"/>
        <label>1</label>
    </ligand>
</feature>
<feature type="binding site" evidence="1">
    <location>
        <position position="79"/>
    </location>
    <ligand>
        <name>[4Fe-4S] cluster</name>
        <dbReference type="ChEBI" id="CHEBI:49883"/>
        <label>1</label>
    </ligand>
</feature>
<feature type="binding site" evidence="1">
    <location>
        <position position="94"/>
    </location>
    <ligand>
        <name>[4Fe-4S] cluster</name>
        <dbReference type="ChEBI" id="CHEBI:49883"/>
        <label>2</label>
        <note>4Fe-4S-S-AdoMet</note>
    </ligand>
</feature>
<feature type="binding site" evidence="1">
    <location>
        <position position="98"/>
    </location>
    <ligand>
        <name>[4Fe-4S] cluster</name>
        <dbReference type="ChEBI" id="CHEBI:49883"/>
        <label>2</label>
        <note>4Fe-4S-S-AdoMet</note>
    </ligand>
</feature>
<feature type="binding site" evidence="1">
    <location>
        <position position="101"/>
    </location>
    <ligand>
        <name>[4Fe-4S] cluster</name>
        <dbReference type="ChEBI" id="CHEBI:49883"/>
        <label>2</label>
        <note>4Fe-4S-S-AdoMet</note>
    </ligand>
</feature>
<feature type="binding site" evidence="1">
    <location>
        <position position="308"/>
    </location>
    <ligand>
        <name>[4Fe-4S] cluster</name>
        <dbReference type="ChEBI" id="CHEBI:49883"/>
        <label>1</label>
    </ligand>
</feature>
<feature type="mutagenesis site" description="Loss of 1 4Fe-4S cluster binding. Loss of activity." evidence="7">
    <original>CEEASCPNLAEC</original>
    <variation>AEEASAPNLAEA</variation>
    <location>
        <begin position="68"/>
        <end position="79"/>
    </location>
</feature>
<feature type="mutagenesis site" description="Loss of 1 4Fe-4S cluster binding. Loss of activity." evidence="7">
    <original>CTRRCPFC</original>
    <variation>ATRRAPFA</variation>
    <location>
        <begin position="94"/>
        <end position="101"/>
    </location>
</feature>
<feature type="sequence conflict" description="In Ref. 1 and 2." evidence="9" ref="1 2">
    <original>L</original>
    <variation>V</variation>
    <location>
        <position position="35"/>
    </location>
</feature>
<keyword id="KW-0004">4Fe-4S</keyword>
<keyword id="KW-0963">Cytoplasm</keyword>
<keyword id="KW-0408">Iron</keyword>
<keyword id="KW-0411">Iron-sulfur</keyword>
<keyword id="KW-0479">Metal-binding</keyword>
<keyword id="KW-1185">Reference proteome</keyword>
<keyword id="KW-0949">S-adenosyl-L-methionine</keyword>
<keyword id="KW-0808">Transferase</keyword>
<reference key="1">
    <citation type="journal article" date="1992" name="J. Biol. Chem.">
        <title>The biosynthesis of lipoic acid. Cloning of lip, a lipoate biosynthetic locus of Escherichia coli.</title>
        <authorList>
            <person name="Hayden M.A."/>
            <person name="Huang I."/>
            <person name="Bussiere D.E."/>
            <person name="Ashley G.W."/>
        </authorList>
    </citation>
    <scope>NUCLEOTIDE SEQUENCE [GENOMIC DNA]</scope>
    <source>
        <strain>K12</strain>
    </source>
</reference>
<reference key="2">
    <citation type="journal article" date="1993" name="J. Bacteriol.">
        <title>Lipoic acid metabolism in Escherichia coli: sequencing and functional characterization of the lipA and lipB genes.</title>
        <authorList>
            <person name="Reed K.E."/>
            <person name="Cronan J.E. Jr."/>
        </authorList>
    </citation>
    <scope>NUCLEOTIDE SEQUENCE [GENOMIC DNA]</scope>
    <source>
        <strain>K12 / W3110 / ATCC 27325 / DSM 5911</strain>
    </source>
</reference>
<reference key="3">
    <citation type="journal article" date="1996" name="DNA Res.">
        <title>A 718-kb DNA sequence of the Escherichia coli K-12 genome corresponding to the 12.7-28.0 min region on the linkage map.</title>
        <authorList>
            <person name="Oshima T."/>
            <person name="Aiba H."/>
            <person name="Baba T."/>
            <person name="Fujita K."/>
            <person name="Hayashi K."/>
            <person name="Honjo A."/>
            <person name="Ikemoto K."/>
            <person name="Inada T."/>
            <person name="Itoh T."/>
            <person name="Kajihara M."/>
            <person name="Kanai K."/>
            <person name="Kashimoto K."/>
            <person name="Kimura S."/>
            <person name="Kitagawa M."/>
            <person name="Makino K."/>
            <person name="Masuda S."/>
            <person name="Miki T."/>
            <person name="Mizobuchi K."/>
            <person name="Mori H."/>
            <person name="Motomura K."/>
            <person name="Nakamura Y."/>
            <person name="Nashimoto H."/>
            <person name="Nishio Y."/>
            <person name="Saito N."/>
            <person name="Sampei G."/>
            <person name="Seki Y."/>
            <person name="Tagami H."/>
            <person name="Takemoto K."/>
            <person name="Wada C."/>
            <person name="Yamamoto Y."/>
            <person name="Yano M."/>
            <person name="Horiuchi T."/>
        </authorList>
    </citation>
    <scope>NUCLEOTIDE SEQUENCE [LARGE SCALE GENOMIC DNA]</scope>
    <source>
        <strain>K12 / W3110 / ATCC 27325 / DSM 5911</strain>
    </source>
</reference>
<reference key="4">
    <citation type="submission" date="1997-01" db="EMBL/GenBank/DDBJ databases">
        <title>Sequence of minutes 4-25 of Escherichia coli.</title>
        <authorList>
            <person name="Chung E."/>
            <person name="Allen E."/>
            <person name="Araujo R."/>
            <person name="Aparicio A.M."/>
            <person name="Davis K."/>
            <person name="Duncan M."/>
            <person name="Federspiel N."/>
            <person name="Hyman R."/>
            <person name="Kalman S."/>
            <person name="Komp C."/>
            <person name="Kurdi O."/>
            <person name="Lew H."/>
            <person name="Lin D."/>
            <person name="Namath A."/>
            <person name="Oefner P."/>
            <person name="Roberts D."/>
            <person name="Schramm S."/>
            <person name="Davis R.W."/>
        </authorList>
    </citation>
    <scope>NUCLEOTIDE SEQUENCE [LARGE SCALE GENOMIC DNA]</scope>
    <source>
        <strain>K12 / MG1655 / ATCC 47076</strain>
    </source>
</reference>
<reference key="5">
    <citation type="journal article" date="1997" name="Science">
        <title>The complete genome sequence of Escherichia coli K-12.</title>
        <authorList>
            <person name="Blattner F.R."/>
            <person name="Plunkett G. III"/>
            <person name="Bloch C.A."/>
            <person name="Perna N.T."/>
            <person name="Burland V."/>
            <person name="Riley M."/>
            <person name="Collado-Vides J."/>
            <person name="Glasner J.D."/>
            <person name="Rode C.K."/>
            <person name="Mayhew G.F."/>
            <person name="Gregor J."/>
            <person name="Davis N.W."/>
            <person name="Kirkpatrick H.A."/>
            <person name="Goeden M.A."/>
            <person name="Rose D.J."/>
            <person name="Mau B."/>
            <person name="Shao Y."/>
        </authorList>
    </citation>
    <scope>NUCLEOTIDE SEQUENCE [LARGE SCALE GENOMIC DNA]</scope>
    <source>
        <strain>K12 / MG1655 / ATCC 47076</strain>
    </source>
</reference>
<reference key="6">
    <citation type="journal article" date="2006" name="Mol. Syst. Biol.">
        <title>Highly accurate genome sequences of Escherichia coli K-12 strains MG1655 and W3110.</title>
        <authorList>
            <person name="Hayashi K."/>
            <person name="Morooka N."/>
            <person name="Yamamoto Y."/>
            <person name="Fujita K."/>
            <person name="Isono K."/>
            <person name="Choi S."/>
            <person name="Ohtsubo E."/>
            <person name="Baba T."/>
            <person name="Wanner B.L."/>
            <person name="Mori H."/>
            <person name="Horiuchi T."/>
        </authorList>
    </citation>
    <scope>NUCLEOTIDE SEQUENCE [LARGE SCALE GENOMIC DNA]</scope>
    <source>
        <strain>K12 / W3110 / ATCC 27325 / DSM 5911</strain>
    </source>
</reference>
<reference key="7">
    <citation type="journal article" date="2000" name="Biochemistry">
        <title>Escherichia coli LipA is a lipoyl synthase: in vitro biosynthesis of lipoylated pyruvate dehydrogenase complex from octanoyl-acyl carrier protein.</title>
        <authorList>
            <person name="Miller J.R."/>
            <person name="Busby R.W."/>
            <person name="Jordan S.W."/>
            <person name="Cheek J."/>
            <person name="Henshaw T.F."/>
            <person name="Ashley G.W."/>
            <person name="Broderick J.B."/>
            <person name="Cronan J.E. Jr."/>
            <person name="Marletta M.A."/>
        </authorList>
    </citation>
    <scope>FUNCTION</scope>
    <scope>EPR SPECTROSCOPY OF IRON-SULFUR CLUSTERS</scope>
    <source>
        <strain>BL21-DE3</strain>
    </source>
</reference>
<reference key="8">
    <citation type="journal article" date="2003" name="Chem. Biol.">
        <title>Assembly of the covalent linkage between lipoic acid and its cognate enzymes.</title>
        <authorList>
            <person name="Zhao X."/>
            <person name="Miller J.R."/>
            <person name="Jiang Y."/>
            <person name="Marletta M.A."/>
            <person name="Cronan J.E. Jr."/>
        </authorList>
    </citation>
    <scope>FUNCTION</scope>
    <source>
        <strain>K12 / JK1</strain>
    </source>
</reference>
<reference key="9">
    <citation type="journal article" date="2004" name="Biochemistry">
        <title>Lipoyl synthase requires two equivalents of S-adenosyl-L-methionine to synthesize one equivalent of lipoic acid.</title>
        <authorList>
            <person name="Cicchillo R.M."/>
            <person name="Iwig D.F."/>
            <person name="Jones A.D."/>
            <person name="Nesbitt N.M."/>
            <person name="Baleanu-Gogonea C."/>
            <person name="Souder M.G."/>
            <person name="Tu L."/>
            <person name="Booker S.J."/>
        </authorList>
    </citation>
    <scope>FUNCTION</scope>
    <scope>CATALYTIC ACTIVITY</scope>
</reference>
<reference key="10">
    <citation type="journal article" date="2004" name="Biochemistry">
        <title>Escherichia coli lipoyl synthase binds two distinct [4Fe-4S] clusters per polypeptide.</title>
        <authorList>
            <person name="Cicchillo R.M."/>
            <person name="Lee K.-H."/>
            <person name="Baleanu-Gogonea C."/>
            <person name="Nesbitt N.M."/>
            <person name="Krebs C."/>
            <person name="Booker S.J."/>
        </authorList>
    </citation>
    <scope>COFACTOR</scope>
    <scope>CHARACTERIZATION</scope>
    <scope>MOESSBAUER SPECTROSCOPY</scope>
    <scope>EPR SPECTROSCOPY</scope>
    <scope>MUTAGENESIS OF 68-CYS--CYS-79 AND 94-CYS--CYS-101</scope>
</reference>
<reference key="11">
    <citation type="journal article" date="2004" name="Chem. Biol.">
        <title>Unraveling the pathway of lipoic acid biosynthesis.</title>
        <authorList>
            <person name="Booker S.J."/>
        </authorList>
    </citation>
    <scope>PATHWAY</scope>
</reference>
<reference key="12">
    <citation type="journal article" date="2005" name="Chem. Biol.">
        <title>A nucleosidase required for in vivo function of the S-adenosyl-L-methionine radical enzyme, biotin synthase.</title>
        <authorList>
            <person name="Choi-Rhee E."/>
            <person name="Cronan J.E."/>
        </authorList>
    </citation>
    <scope>ACTIVITY REGULATION</scope>
</reference>
<reference key="13">
    <citation type="journal article" date="2005" name="J. Am. Chem. Soc.">
        <title>Mechanistic investigations of lipoic acid biosynthesis in Escherichia coli: both sulfur atoms in lipoic acid are contributed by the same lipoyl synthase polypeptide.</title>
        <authorList>
            <person name="Cicchillo R.M."/>
            <person name="Booker S.J."/>
        </authorList>
    </citation>
    <scope>REACTION MECHANISM</scope>
</reference>
<sequence length="321" mass="36072">MSKPIVMERGVKYRDADKMALIPVKNVATEREALLRKPEWMKIKLPADSTRIQGIKAAMRKNGLHSVCEEASCPNLAECFNHGTATFMILGAICTRRCPFCDVAHGRPVAPDANEPVKLAQTIADMALRYVVITSVDRDDLRDGGAQHFADCITAIREKSPQIKIETLVPDFRGRMDRALDILTATPPDVFNHNLENVPRIYRQVRPGADYNWSLKLLERFKEAHPEIPTKSGLMVGLGETNEEIIEVMRDLRRHGVTMLTLGQYLQPSRHHLPVQRYVSPDEFDEMKAEALAMGFTHAACGPFVRSSYHADLQAKGMEVK</sequence>
<organism>
    <name type="scientific">Escherichia coli (strain K12)</name>
    <dbReference type="NCBI Taxonomy" id="83333"/>
    <lineage>
        <taxon>Bacteria</taxon>
        <taxon>Pseudomonadati</taxon>
        <taxon>Pseudomonadota</taxon>
        <taxon>Gammaproteobacteria</taxon>
        <taxon>Enterobacterales</taxon>
        <taxon>Enterobacteriaceae</taxon>
        <taxon>Escherichia</taxon>
    </lineage>
</organism>
<dbReference type="EC" id="2.8.1.8" evidence="1 6"/>
<dbReference type="EMBL" id="M82805">
    <property type="protein sequence ID" value="AAA24072.1"/>
    <property type="status" value="ALT_INIT"/>
    <property type="molecule type" value="Genomic_DNA"/>
</dbReference>
<dbReference type="EMBL" id="L07636">
    <property type="protein sequence ID" value="AAA66345.1"/>
    <property type="molecule type" value="Genomic_DNA"/>
</dbReference>
<dbReference type="EMBL" id="U82598">
    <property type="protein sequence ID" value="AAB40828.1"/>
    <property type="molecule type" value="Genomic_DNA"/>
</dbReference>
<dbReference type="EMBL" id="U00096">
    <property type="protein sequence ID" value="AAC73729.1"/>
    <property type="molecule type" value="Genomic_DNA"/>
</dbReference>
<dbReference type="EMBL" id="AP009048">
    <property type="protein sequence ID" value="BAA35271.1"/>
    <property type="molecule type" value="Genomic_DNA"/>
</dbReference>
<dbReference type="PIR" id="B64797">
    <property type="entry name" value="B64797"/>
</dbReference>
<dbReference type="RefSeq" id="NP_415161.1">
    <property type="nucleotide sequence ID" value="NC_000913.3"/>
</dbReference>
<dbReference type="RefSeq" id="WP_000042632.1">
    <property type="nucleotide sequence ID" value="NZ_STEB01000031.1"/>
</dbReference>
<dbReference type="SMR" id="P60716"/>
<dbReference type="BioGRID" id="4260638">
    <property type="interactions" value="76"/>
</dbReference>
<dbReference type="BioGRID" id="849612">
    <property type="interactions" value="2"/>
</dbReference>
<dbReference type="DIP" id="DIP-48008N"/>
<dbReference type="FunCoup" id="P60716">
    <property type="interactions" value="883"/>
</dbReference>
<dbReference type="IntAct" id="P60716">
    <property type="interactions" value="13"/>
</dbReference>
<dbReference type="STRING" id="511145.b0628"/>
<dbReference type="jPOST" id="P60716"/>
<dbReference type="PaxDb" id="511145-b0628"/>
<dbReference type="EnsemblBacteria" id="AAC73729">
    <property type="protein sequence ID" value="AAC73729"/>
    <property type="gene ID" value="b0628"/>
</dbReference>
<dbReference type="GeneID" id="93776854"/>
<dbReference type="GeneID" id="945227"/>
<dbReference type="KEGG" id="ecj:JW0623"/>
<dbReference type="KEGG" id="eco:b0628"/>
<dbReference type="KEGG" id="ecoc:C3026_03135"/>
<dbReference type="PATRIC" id="fig|1411691.4.peg.1640"/>
<dbReference type="EchoBASE" id="EB1283"/>
<dbReference type="eggNOG" id="COG0320">
    <property type="taxonomic scope" value="Bacteria"/>
</dbReference>
<dbReference type="HOGENOM" id="CLU_033144_2_1_6"/>
<dbReference type="InParanoid" id="P60716"/>
<dbReference type="OMA" id="PYCDIDF"/>
<dbReference type="OrthoDB" id="9787898at2"/>
<dbReference type="PhylomeDB" id="P60716"/>
<dbReference type="BioCyc" id="EcoCyc:EG11306-MONOMER"/>
<dbReference type="BioCyc" id="MetaCyc:EG11306-MONOMER"/>
<dbReference type="BRENDA" id="2.8.1.8">
    <property type="organism ID" value="2026"/>
</dbReference>
<dbReference type="UniPathway" id="UPA00538">
    <property type="reaction ID" value="UER00593"/>
</dbReference>
<dbReference type="PRO" id="PR:P60716"/>
<dbReference type="Proteomes" id="UP000000625">
    <property type="component" value="Chromosome"/>
</dbReference>
<dbReference type="GO" id="GO:0005737">
    <property type="term" value="C:cytoplasm"/>
    <property type="evidence" value="ECO:0000314"/>
    <property type="project" value="EcoliWiki"/>
</dbReference>
<dbReference type="GO" id="GO:0005829">
    <property type="term" value="C:cytosol"/>
    <property type="evidence" value="ECO:0000314"/>
    <property type="project" value="EcoCyc"/>
</dbReference>
<dbReference type="GO" id="GO:0051539">
    <property type="term" value="F:4 iron, 4 sulfur cluster binding"/>
    <property type="evidence" value="ECO:0000314"/>
    <property type="project" value="EcoliWiki"/>
</dbReference>
<dbReference type="GO" id="GO:0016992">
    <property type="term" value="F:lipoate synthase activity"/>
    <property type="evidence" value="ECO:0000314"/>
    <property type="project" value="EcoliWiki"/>
</dbReference>
<dbReference type="GO" id="GO:0046872">
    <property type="term" value="F:metal ion binding"/>
    <property type="evidence" value="ECO:0007669"/>
    <property type="project" value="UniProtKB-KW"/>
</dbReference>
<dbReference type="GO" id="GO:0042803">
    <property type="term" value="F:protein homodimerization activity"/>
    <property type="evidence" value="ECO:0000314"/>
    <property type="project" value="EcoCyc"/>
</dbReference>
<dbReference type="GO" id="GO:0009107">
    <property type="term" value="P:lipoate biosynthetic process"/>
    <property type="evidence" value="ECO:0000315"/>
    <property type="project" value="EcoliWiki"/>
</dbReference>
<dbReference type="CDD" id="cd01335">
    <property type="entry name" value="Radical_SAM"/>
    <property type="match status" value="1"/>
</dbReference>
<dbReference type="FunFam" id="3.20.20.70:FF:000023">
    <property type="entry name" value="Lipoyl synthase"/>
    <property type="match status" value="1"/>
</dbReference>
<dbReference type="Gene3D" id="3.20.20.70">
    <property type="entry name" value="Aldolase class I"/>
    <property type="match status" value="1"/>
</dbReference>
<dbReference type="HAMAP" id="MF_00206">
    <property type="entry name" value="Lipoyl_synth"/>
    <property type="match status" value="1"/>
</dbReference>
<dbReference type="InterPro" id="IPR013785">
    <property type="entry name" value="Aldolase_TIM"/>
</dbReference>
<dbReference type="InterPro" id="IPR006638">
    <property type="entry name" value="Elp3/MiaA/NifB-like_rSAM"/>
</dbReference>
<dbReference type="InterPro" id="IPR031691">
    <property type="entry name" value="LIAS_N"/>
</dbReference>
<dbReference type="InterPro" id="IPR003698">
    <property type="entry name" value="Lipoyl_synth"/>
</dbReference>
<dbReference type="InterPro" id="IPR007197">
    <property type="entry name" value="rSAM"/>
</dbReference>
<dbReference type="NCBIfam" id="TIGR00510">
    <property type="entry name" value="lipA"/>
    <property type="match status" value="1"/>
</dbReference>
<dbReference type="NCBIfam" id="NF004019">
    <property type="entry name" value="PRK05481.1"/>
    <property type="match status" value="1"/>
</dbReference>
<dbReference type="NCBIfam" id="NF009544">
    <property type="entry name" value="PRK12928.1"/>
    <property type="match status" value="1"/>
</dbReference>
<dbReference type="PANTHER" id="PTHR10949">
    <property type="entry name" value="LIPOYL SYNTHASE"/>
    <property type="match status" value="1"/>
</dbReference>
<dbReference type="PANTHER" id="PTHR10949:SF0">
    <property type="entry name" value="LIPOYL SYNTHASE, MITOCHONDRIAL"/>
    <property type="match status" value="1"/>
</dbReference>
<dbReference type="Pfam" id="PF16881">
    <property type="entry name" value="LIAS_N"/>
    <property type="match status" value="1"/>
</dbReference>
<dbReference type="Pfam" id="PF04055">
    <property type="entry name" value="Radical_SAM"/>
    <property type="match status" value="1"/>
</dbReference>
<dbReference type="PIRSF" id="PIRSF005963">
    <property type="entry name" value="Lipoyl_synth"/>
    <property type="match status" value="1"/>
</dbReference>
<dbReference type="SFLD" id="SFLDF00271">
    <property type="entry name" value="lipoyl_synthase"/>
    <property type="match status" value="1"/>
</dbReference>
<dbReference type="SFLD" id="SFLDG01058">
    <property type="entry name" value="lipoyl_synthase_like"/>
    <property type="match status" value="1"/>
</dbReference>
<dbReference type="SMART" id="SM00729">
    <property type="entry name" value="Elp3"/>
    <property type="match status" value="1"/>
</dbReference>
<dbReference type="SUPFAM" id="SSF102114">
    <property type="entry name" value="Radical SAM enzymes"/>
    <property type="match status" value="1"/>
</dbReference>
<dbReference type="PROSITE" id="PS51918">
    <property type="entry name" value="RADICAL_SAM"/>
    <property type="match status" value="1"/>
</dbReference>